<reference key="1">
    <citation type="journal article" date="2002" name="J. Mol. Microbiol. Biotechnol.">
        <title>The genome of Methanosarcina mazei: evidence for lateral gene transfer between Bacteria and Archaea.</title>
        <authorList>
            <person name="Deppenmeier U."/>
            <person name="Johann A."/>
            <person name="Hartsch T."/>
            <person name="Merkl R."/>
            <person name="Schmitz R.A."/>
            <person name="Martinez-Arias R."/>
            <person name="Henne A."/>
            <person name="Wiezer A."/>
            <person name="Baeumer S."/>
            <person name="Jacobi C."/>
            <person name="Brueggemann H."/>
            <person name="Lienard T."/>
            <person name="Christmann A."/>
            <person name="Boemecke M."/>
            <person name="Steckel S."/>
            <person name="Bhattacharyya A."/>
            <person name="Lykidis A."/>
            <person name="Overbeek R."/>
            <person name="Klenk H.-P."/>
            <person name="Gunsalus R.P."/>
            <person name="Fritz H.-J."/>
            <person name="Gottschalk G."/>
        </authorList>
    </citation>
    <scope>NUCLEOTIDE SEQUENCE [LARGE SCALE GENOMIC DNA]</scope>
    <source>
        <strain>ATCC BAA-159 / DSM 3647 / Goe1 / Go1 / JCM 11833 / OCM 88</strain>
    </source>
</reference>
<gene>
    <name evidence="1" type="primary">ftr</name>
    <name type="ordered locus">MM_1321</name>
</gene>
<accession>Q8PXA1</accession>
<feature type="chain" id="PRO_0000138121" description="Formylmethanofuran--tetrahydromethanopterin formyltransferase">
    <location>
        <begin position="1"/>
        <end position="297"/>
    </location>
</feature>
<proteinExistence type="inferred from homology"/>
<keyword id="KW-0012">Acyltransferase</keyword>
<keyword id="KW-0963">Cytoplasm</keyword>
<keyword id="KW-0484">Methanogenesis</keyword>
<keyword id="KW-0554">One-carbon metabolism</keyword>
<keyword id="KW-0808">Transferase</keyword>
<name>FTR_METMA</name>
<evidence type="ECO:0000255" key="1">
    <source>
        <dbReference type="HAMAP-Rule" id="MF_00579"/>
    </source>
</evidence>
<sequence length="297" mass="31561">MEINGVEIEDTYAEAFPIKIARVLITAVTKRWAQVAATEATGFGTSVIMCPAEAGIERFASPSETPDGRPGAYIQICTFKYEALEEQLLERIGQCVLTAPTTAVFNGLPDSEKQFNVGFKLKFFGDGMESEAQIAGRKVFKVPIMEGDFVTEDNIGAIAGIAGGNFFIFGDSQMSALTAAEAAVDAIAELEGTITPFPGGIVASGSKSGANKYKFLKATANEKFCPSIKDKVENTEIPADVNAVYEIVINGLDEASIKAAMKAGIEAAVTVPGIKKISAGNYGGKLGKYQFKLHELF</sequence>
<comment type="function">
    <text evidence="1">Catalyzes the reversible transfer of a formyl group from formylmethanofuran (formyl-MFR) to tetrahydromethanopterin (H(4)MPT) to produce 5-formyl tetrahydromethanopterin (5-formyl-H(4)MPT) and methanofuran (MFR).</text>
</comment>
<comment type="catalytic activity">
    <reaction evidence="1">
        <text>N-formylmethanofuran + 5,6,7,8-tetrahydromethanopterin + H(+) = N(5)-formyl-5,6,7,8-tetrahydromethanopterin + methanofuran</text>
        <dbReference type="Rhea" id="RHEA:18061"/>
        <dbReference type="ChEBI" id="CHEBI:15378"/>
        <dbReference type="ChEBI" id="CHEBI:57727"/>
        <dbReference type="ChEBI" id="CHEBI:58018"/>
        <dbReference type="ChEBI" id="CHEBI:58103"/>
        <dbReference type="ChEBI" id="CHEBI:58151"/>
        <dbReference type="EC" id="2.3.1.101"/>
    </reaction>
</comment>
<comment type="pathway">
    <text evidence="1">One-carbon metabolism; methanogenesis from CO(2); 5,10-methenyl-5,6,7,8-tetrahydromethanopterin from CO(2): step 2/3.</text>
</comment>
<comment type="subunit">
    <text evidence="1">Homotetramer.</text>
</comment>
<comment type="subcellular location">
    <subcellularLocation>
        <location evidence="1">Cytoplasm</location>
    </subcellularLocation>
</comment>
<comment type="similarity">
    <text evidence="1">Belongs to the FTR family.</text>
</comment>
<dbReference type="EC" id="2.3.1.101" evidence="1"/>
<dbReference type="EMBL" id="AE008384">
    <property type="protein sequence ID" value="AAM31017.1"/>
    <property type="molecule type" value="Genomic_DNA"/>
</dbReference>
<dbReference type="SMR" id="Q8PXA1"/>
<dbReference type="KEGG" id="mma:MM_1321"/>
<dbReference type="PATRIC" id="fig|192952.21.peg.1534"/>
<dbReference type="eggNOG" id="arCOG02695">
    <property type="taxonomic scope" value="Archaea"/>
</dbReference>
<dbReference type="HOGENOM" id="CLU_081314_0_0_2"/>
<dbReference type="UniPathway" id="UPA00640">
    <property type="reaction ID" value="UER00693"/>
</dbReference>
<dbReference type="Proteomes" id="UP000000595">
    <property type="component" value="Chromosome"/>
</dbReference>
<dbReference type="GO" id="GO:0005737">
    <property type="term" value="C:cytoplasm"/>
    <property type="evidence" value="ECO:0007669"/>
    <property type="project" value="UniProtKB-SubCell"/>
</dbReference>
<dbReference type="GO" id="GO:0030270">
    <property type="term" value="F:formylmethanofuran-tetrahydromethanopterin N-formyltransferase activity"/>
    <property type="evidence" value="ECO:0007669"/>
    <property type="project" value="UniProtKB-UniRule"/>
</dbReference>
<dbReference type="GO" id="GO:0019386">
    <property type="term" value="P:methanogenesis, from carbon dioxide"/>
    <property type="evidence" value="ECO:0007669"/>
    <property type="project" value="UniProtKB-UniRule"/>
</dbReference>
<dbReference type="GO" id="GO:0006730">
    <property type="term" value="P:one-carbon metabolic process"/>
    <property type="evidence" value="ECO:0007669"/>
    <property type="project" value="UniProtKB-UniRule"/>
</dbReference>
<dbReference type="Gene3D" id="3.30.70.520">
    <property type="match status" value="2"/>
</dbReference>
<dbReference type="HAMAP" id="MF_00579">
    <property type="entry name" value="FTR"/>
    <property type="match status" value="1"/>
</dbReference>
<dbReference type="InterPro" id="IPR014053">
    <property type="entry name" value="ForMFR_H4MPT_ForTrfase"/>
</dbReference>
<dbReference type="InterPro" id="IPR002770">
    <property type="entry name" value="ForMFR_H4MPT_ForTrfase_C"/>
</dbReference>
<dbReference type="InterPro" id="IPR023447">
    <property type="entry name" value="ForMFR_H4MPT_ForTrfase_fd-like"/>
</dbReference>
<dbReference type="InterPro" id="IPR022667">
    <property type="entry name" value="ForMFR_H4MPT_ForTrfase_N"/>
</dbReference>
<dbReference type="NCBIfam" id="TIGR03119">
    <property type="entry name" value="one_C_fhcD"/>
    <property type="match status" value="1"/>
</dbReference>
<dbReference type="NCBIfam" id="NF002554">
    <property type="entry name" value="PRK02114.1"/>
    <property type="match status" value="1"/>
</dbReference>
<dbReference type="Pfam" id="PF01913">
    <property type="entry name" value="FTR"/>
    <property type="match status" value="1"/>
</dbReference>
<dbReference type="Pfam" id="PF02741">
    <property type="entry name" value="FTR_C"/>
    <property type="match status" value="1"/>
</dbReference>
<dbReference type="PIRSF" id="PIRSF006414">
    <property type="entry name" value="Ftr_formyl_trnsf"/>
    <property type="match status" value="1"/>
</dbReference>
<dbReference type="SUPFAM" id="SSF55112">
    <property type="entry name" value="Formylmethanofuran:tetrahydromethanopterin formyltransferase"/>
    <property type="match status" value="2"/>
</dbReference>
<organism>
    <name type="scientific">Methanosarcina mazei (strain ATCC BAA-159 / DSM 3647 / Goe1 / Go1 / JCM 11833 / OCM 88)</name>
    <name type="common">Methanosarcina frisia</name>
    <dbReference type="NCBI Taxonomy" id="192952"/>
    <lineage>
        <taxon>Archaea</taxon>
        <taxon>Methanobacteriati</taxon>
        <taxon>Methanobacteriota</taxon>
        <taxon>Stenosarchaea group</taxon>
        <taxon>Methanomicrobia</taxon>
        <taxon>Methanosarcinales</taxon>
        <taxon>Methanosarcinaceae</taxon>
        <taxon>Methanosarcina</taxon>
    </lineage>
</organism>
<protein>
    <recommendedName>
        <fullName evidence="1">Formylmethanofuran--tetrahydromethanopterin formyltransferase</fullName>
        <shortName evidence="1">Ftr</shortName>
        <ecNumber evidence="1">2.3.1.101</ecNumber>
    </recommendedName>
    <alternativeName>
        <fullName evidence="1">H4MPT formyltransferase</fullName>
    </alternativeName>
</protein>